<name>IOLG_HALH5</name>
<organism>
    <name type="scientific">Halalkalibacterium halodurans (strain ATCC BAA-125 / DSM 18197 / FERM 7344 / JCM 9153 / C-125)</name>
    <name type="common">Bacillus halodurans</name>
    <dbReference type="NCBI Taxonomy" id="272558"/>
    <lineage>
        <taxon>Bacteria</taxon>
        <taxon>Bacillati</taxon>
        <taxon>Bacillota</taxon>
        <taxon>Bacilli</taxon>
        <taxon>Bacillales</taxon>
        <taxon>Bacillaceae</taxon>
        <taxon>Halalkalibacterium (ex Joshi et al. 2022)</taxon>
    </lineage>
</organism>
<gene>
    <name evidence="1" type="primary">iolG</name>
    <name type="ordered locus">BH2316</name>
</gene>
<reference key="1">
    <citation type="journal article" date="2000" name="Nucleic Acids Res.">
        <title>Complete genome sequence of the alkaliphilic bacterium Bacillus halodurans and genomic sequence comparison with Bacillus subtilis.</title>
        <authorList>
            <person name="Takami H."/>
            <person name="Nakasone K."/>
            <person name="Takaki Y."/>
            <person name="Maeno G."/>
            <person name="Sasaki R."/>
            <person name="Masui N."/>
            <person name="Fuji F."/>
            <person name="Hirama C."/>
            <person name="Nakamura Y."/>
            <person name="Ogasawara N."/>
            <person name="Kuhara S."/>
            <person name="Horikoshi K."/>
        </authorList>
    </citation>
    <scope>NUCLEOTIDE SEQUENCE [LARGE SCALE GENOMIC DNA]</scope>
    <source>
        <strain>ATCC BAA-125 / DSM 18197 / FERM 7344 / JCM 9153 / C-125</strain>
    </source>
</reference>
<keyword id="KW-0520">NAD</keyword>
<keyword id="KW-0560">Oxidoreductase</keyword>
<keyword id="KW-1185">Reference proteome</keyword>
<proteinExistence type="inferred from homology"/>
<sequence>MTLRFGVIGTGAIGREHMKRIENKLSGGKIVAVTDMNQEAAKQVVTQMKLEADVYPDDRSLVAADNVDAVLVTSWGPAHEANVLAAIEAGKYVFVEKPLATTAEGCMKIIKAEMNHGKRLVQVGFMRRYDKGYVQLKKAIDDHFIGEPLMVRCAHRNPEVGESYIDDMAIHDTLIHEIDVLHWLIDDEYESVSVSFPKKTKHALPHLRDPRVVTLETKGGVLITAEVFVNCKYGYDIQCEVIREEGIASLPEVDSISFRKRATLGTNILMDWKQRFIEAYDVELQHFIDSIKQSGEPSGPNAWDGYVAAITADAALKASNSGQKQFISLKEKPAFYSVKKENAHEAML</sequence>
<comment type="function">
    <text evidence="1">Involved in the oxidation of myo-inositol (MI) and D-chiro-inositol (DCI) to 2-keto-myo-inositol (2KMI or 2-inosose) and 1-keto-D-chiro-inositol (1KDCI), respectively.</text>
</comment>
<comment type="catalytic activity">
    <reaction evidence="1">
        <text>myo-inositol + NAD(+) = scyllo-inosose + NADH + H(+)</text>
        <dbReference type="Rhea" id="RHEA:16949"/>
        <dbReference type="ChEBI" id="CHEBI:15378"/>
        <dbReference type="ChEBI" id="CHEBI:17268"/>
        <dbReference type="ChEBI" id="CHEBI:17811"/>
        <dbReference type="ChEBI" id="CHEBI:57540"/>
        <dbReference type="ChEBI" id="CHEBI:57945"/>
        <dbReference type="EC" id="1.1.1.18"/>
    </reaction>
</comment>
<comment type="catalytic activity">
    <reaction evidence="1">
        <text>1D-chiro-inositol + NAD(+) = scyllo-inosine + NADH + H(+)</text>
        <dbReference type="Rhea" id="RHEA:25832"/>
        <dbReference type="ChEBI" id="CHEBI:15378"/>
        <dbReference type="ChEBI" id="CHEBI:27372"/>
        <dbReference type="ChEBI" id="CHEBI:50920"/>
        <dbReference type="ChEBI" id="CHEBI:57540"/>
        <dbReference type="ChEBI" id="CHEBI:57945"/>
        <dbReference type="EC" id="1.1.1.369"/>
    </reaction>
</comment>
<comment type="pathway">
    <text evidence="1">Polyol metabolism; myo-inositol degradation into acetyl-CoA; acetyl-CoA from myo-inositol: step 1/7.</text>
</comment>
<comment type="subunit">
    <text evidence="1">Homotetramer.</text>
</comment>
<comment type="similarity">
    <text evidence="1">Belongs to the Gfo/Idh/MocA family.</text>
</comment>
<accession>Q9KAH1</accession>
<evidence type="ECO:0000255" key="1">
    <source>
        <dbReference type="HAMAP-Rule" id="MF_01671"/>
    </source>
</evidence>
<feature type="chain" id="PRO_0000352556" description="Inositol 2-dehydrogenase/D-chiro-inositol 3-dehydrogenase">
    <location>
        <begin position="1"/>
        <end position="348"/>
    </location>
</feature>
<dbReference type="EC" id="1.1.1.18" evidence="1"/>
<dbReference type="EC" id="1.1.1.369" evidence="1"/>
<dbReference type="EMBL" id="BA000004">
    <property type="protein sequence ID" value="BAB06035.1"/>
    <property type="molecule type" value="Genomic_DNA"/>
</dbReference>
<dbReference type="PIR" id="D83939">
    <property type="entry name" value="D83939"/>
</dbReference>
<dbReference type="RefSeq" id="WP_010898472.1">
    <property type="nucleotide sequence ID" value="NC_002570.2"/>
</dbReference>
<dbReference type="SMR" id="Q9KAH1"/>
<dbReference type="STRING" id="272558.gene:10728214"/>
<dbReference type="KEGG" id="bha:BH2316"/>
<dbReference type="eggNOG" id="COG0673">
    <property type="taxonomic scope" value="Bacteria"/>
</dbReference>
<dbReference type="HOGENOM" id="CLU_023194_0_1_9"/>
<dbReference type="OrthoDB" id="9815825at2"/>
<dbReference type="UniPathway" id="UPA00076">
    <property type="reaction ID" value="UER00143"/>
</dbReference>
<dbReference type="Proteomes" id="UP000001258">
    <property type="component" value="Chromosome"/>
</dbReference>
<dbReference type="GO" id="GO:0050112">
    <property type="term" value="F:inositol 2-dehydrogenase (NAD+) activity"/>
    <property type="evidence" value="ECO:0007669"/>
    <property type="project" value="UniProtKB-UniRule"/>
</dbReference>
<dbReference type="GO" id="GO:0000166">
    <property type="term" value="F:nucleotide binding"/>
    <property type="evidence" value="ECO:0007669"/>
    <property type="project" value="InterPro"/>
</dbReference>
<dbReference type="GO" id="GO:0019310">
    <property type="term" value="P:inositol catabolic process"/>
    <property type="evidence" value="ECO:0007669"/>
    <property type="project" value="UniProtKB-UniRule"/>
</dbReference>
<dbReference type="Gene3D" id="3.30.360.10">
    <property type="entry name" value="Dihydrodipicolinate Reductase, domain 2"/>
    <property type="match status" value="1"/>
</dbReference>
<dbReference type="Gene3D" id="3.40.50.720">
    <property type="entry name" value="NAD(P)-binding Rossmann-like Domain"/>
    <property type="match status" value="1"/>
</dbReference>
<dbReference type="HAMAP" id="MF_01671">
    <property type="entry name" value="IolG"/>
    <property type="match status" value="1"/>
</dbReference>
<dbReference type="InterPro" id="IPR050424">
    <property type="entry name" value="Gfo-Idh-MocA_inositol_DH"/>
</dbReference>
<dbReference type="InterPro" id="IPR004104">
    <property type="entry name" value="Gfo/Idh/MocA-like_OxRdtase_C"/>
</dbReference>
<dbReference type="InterPro" id="IPR000683">
    <property type="entry name" value="Gfo/Idh/MocA-like_OxRdtase_N"/>
</dbReference>
<dbReference type="InterPro" id="IPR023794">
    <property type="entry name" value="MI/DCI_dehydrogenase"/>
</dbReference>
<dbReference type="InterPro" id="IPR036291">
    <property type="entry name" value="NAD(P)-bd_dom_sf"/>
</dbReference>
<dbReference type="PANTHER" id="PTHR43593">
    <property type="match status" value="1"/>
</dbReference>
<dbReference type="PANTHER" id="PTHR43593:SF1">
    <property type="entry name" value="INOSITOL 2-DEHYDROGENASE"/>
    <property type="match status" value="1"/>
</dbReference>
<dbReference type="Pfam" id="PF01408">
    <property type="entry name" value="GFO_IDH_MocA"/>
    <property type="match status" value="1"/>
</dbReference>
<dbReference type="Pfam" id="PF02894">
    <property type="entry name" value="GFO_IDH_MocA_C"/>
    <property type="match status" value="1"/>
</dbReference>
<dbReference type="SUPFAM" id="SSF55347">
    <property type="entry name" value="Glyceraldehyde-3-phosphate dehydrogenase-like, C-terminal domain"/>
    <property type="match status" value="1"/>
</dbReference>
<dbReference type="SUPFAM" id="SSF51735">
    <property type="entry name" value="NAD(P)-binding Rossmann-fold domains"/>
    <property type="match status" value="1"/>
</dbReference>
<protein>
    <recommendedName>
        <fullName evidence="1">Inositol 2-dehydrogenase/D-chiro-inositol 3-dehydrogenase</fullName>
        <ecNumber evidence="1">1.1.1.18</ecNumber>
        <ecNumber evidence="1">1.1.1.369</ecNumber>
    </recommendedName>
    <alternativeName>
        <fullName evidence="1">Myo-inositol 2-dehydrogenase/D-chiro-inositol 3-dehydrogenase</fullName>
        <shortName evidence="1">MI 2-dehydrogenase/DCI 3-dehydrogenase</shortName>
    </alternativeName>
</protein>